<reference key="1">
    <citation type="journal article" date="1999" name="Genetics">
        <title>Divergence of the hyperthermophilic archaea Pyrococcus furiosus and P. horikoshii inferred from complete genomic sequences.</title>
        <authorList>
            <person name="Maeder D.L."/>
            <person name="Weiss R.B."/>
            <person name="Dunn D.M."/>
            <person name="Cherry J.L."/>
            <person name="Gonzalez J.M."/>
            <person name="DiRuggiero J."/>
            <person name="Robb F.T."/>
        </authorList>
    </citation>
    <scope>NUCLEOTIDE SEQUENCE [LARGE SCALE GENOMIC DNA]</scope>
    <source>
        <strain>ATCC 43587 / DSM 3638 / JCM 8422 / Vc1</strain>
    </source>
</reference>
<reference key="2">
    <citation type="journal article" date="2007" name="Mol. Microbiol.">
        <title>Characterization of the TrmB-like protein, PF0124, a TGM-recognizing global transcriptional regulator of the hyperthermophilic archaeon Pyrococcus furiosus.</title>
        <authorList>
            <person name="Lee S.J."/>
            <person name="Surma M."/>
            <person name="Seitz S."/>
            <person name="Hausner W."/>
            <person name="Thomm M."/>
            <person name="Boos W."/>
        </authorList>
    </citation>
    <scope>FUNCTION</scope>
    <scope>DNA-BINDING</scope>
    <scope>DOMAIN</scope>
    <scope>GENE NAME</scope>
</reference>
<accession>Q8U3H1</accession>
<keyword id="KW-0002">3D-structure</keyword>
<keyword id="KW-0238">DNA-binding</keyword>
<keyword id="KW-1185">Reference proteome</keyword>
<keyword id="KW-0804">Transcription</keyword>
<keyword id="KW-0805">Transcription regulation</keyword>
<protein>
    <recommendedName>
        <fullName>Putative HTH-type transcriptional regulator TrmBL2</fullName>
    </recommendedName>
</protein>
<sequence>MSKDRMVELLQEHFELNLYEARAYVALVAFGVLTPAELASVSEVPAPRTYDVLRSLEKKGFAMTQPGKTNKYRPVHPANVLEKFIQDWQERVKEELEAKKKAKEELLELMAPLIETEVPKYGVERVWVVRGIKNSTLKTKEMLEEAQNEILLADDGFIAVNLEDDIIKAVDRGVKTKILLTKNLLPRLKASKIIDYAKEGKLELRALDKFDLPMLICDEEVFFALEDLAARYFNYETQVWIKDHRVVALFKEKFNEYWEKAEKV</sequence>
<feature type="chain" id="PRO_0000428841" description="Putative HTH-type transcriptional regulator TrmBL2">
    <location>
        <begin position="1"/>
        <end position="264"/>
    </location>
</feature>
<feature type="DNA-binding region" description="H-T-H motif" evidence="1">
    <location>
        <begin position="33"/>
        <end position="54"/>
    </location>
</feature>
<feature type="helix" evidence="5">
    <location>
        <begin position="3"/>
        <end position="13"/>
    </location>
</feature>
<feature type="helix" evidence="5">
    <location>
        <begin position="18"/>
        <end position="30"/>
    </location>
</feature>
<feature type="strand" evidence="5">
    <location>
        <begin position="31"/>
        <end position="33"/>
    </location>
</feature>
<feature type="helix" evidence="5">
    <location>
        <begin position="35"/>
        <end position="40"/>
    </location>
</feature>
<feature type="strand" evidence="5">
    <location>
        <begin position="41"/>
        <end position="44"/>
    </location>
</feature>
<feature type="helix" evidence="5">
    <location>
        <begin position="46"/>
        <end position="48"/>
    </location>
</feature>
<feature type="helix" evidence="5">
    <location>
        <begin position="49"/>
        <end position="58"/>
    </location>
</feature>
<feature type="strand" evidence="5">
    <location>
        <begin position="61"/>
        <end position="65"/>
    </location>
</feature>
<feature type="strand" evidence="5">
    <location>
        <begin position="67"/>
        <end position="69"/>
    </location>
</feature>
<feature type="strand" evidence="5">
    <location>
        <begin position="71"/>
        <end position="74"/>
    </location>
</feature>
<feature type="helix" evidence="5">
    <location>
        <begin position="77"/>
        <end position="110"/>
    </location>
</feature>
<feature type="turn" evidence="5">
    <location>
        <begin position="111"/>
        <end position="113"/>
    </location>
</feature>
<feature type="strand" evidence="5">
    <location>
        <begin position="125"/>
        <end position="129"/>
    </location>
</feature>
<feature type="helix" evidence="5">
    <location>
        <begin position="132"/>
        <end position="145"/>
    </location>
</feature>
<feature type="strand" evidence="5">
    <location>
        <begin position="148"/>
        <end position="156"/>
    </location>
</feature>
<feature type="strand" evidence="4">
    <location>
        <begin position="158"/>
        <end position="161"/>
    </location>
</feature>
<feature type="helix" evidence="5">
    <location>
        <begin position="163"/>
        <end position="171"/>
    </location>
</feature>
<feature type="strand" evidence="5">
    <location>
        <begin position="175"/>
        <end position="181"/>
    </location>
</feature>
<feature type="helix" evidence="5">
    <location>
        <begin position="182"/>
        <end position="187"/>
    </location>
</feature>
<feature type="strand" evidence="5">
    <location>
        <begin position="189"/>
        <end position="192"/>
    </location>
</feature>
<feature type="helix" evidence="5">
    <location>
        <begin position="193"/>
        <end position="198"/>
    </location>
</feature>
<feature type="strand" evidence="5">
    <location>
        <begin position="201"/>
        <end position="208"/>
    </location>
</feature>
<feature type="strand" evidence="5">
    <location>
        <begin position="214"/>
        <end position="217"/>
    </location>
</feature>
<feature type="strand" evidence="5">
    <location>
        <begin position="220"/>
        <end position="224"/>
    </location>
</feature>
<feature type="helix" evidence="5">
    <location>
        <begin position="228"/>
        <end position="232"/>
    </location>
</feature>
<feature type="strand" evidence="5">
    <location>
        <begin position="238"/>
        <end position="242"/>
    </location>
</feature>
<feature type="helix" evidence="5">
    <location>
        <begin position="244"/>
        <end position="258"/>
    </location>
</feature>
<feature type="strand" evidence="5">
    <location>
        <begin position="261"/>
        <end position="263"/>
    </location>
</feature>
<name>TMBL2_PYRFU</name>
<comment type="function">
    <text evidence="2">Binds to the maltodextrin transport gene cluster (mdxE operon) promoter and to some other TGM (Thermococcales-Glycolytic-Motif) sequences, but not exclusively.</text>
</comment>
<comment type="domain">
    <text evidence="2">Lacks the C-terminal sugar-binding domain.</text>
</comment>
<comment type="similarity">
    <text evidence="3">Belongs to the transcriptional regulator TrmB family.</text>
</comment>
<dbReference type="EMBL" id="AE009950">
    <property type="protein sequence ID" value="AAL80620.1"/>
    <property type="molecule type" value="Genomic_DNA"/>
</dbReference>
<dbReference type="RefSeq" id="WP_011011613.1">
    <property type="nucleotide sequence ID" value="NZ_CP023154.1"/>
</dbReference>
<dbReference type="PDB" id="5BOX">
    <property type="method" value="X-ray"/>
    <property type="resolution" value="2.50 A"/>
    <property type="chains" value="A/B/C/D=2-264"/>
</dbReference>
<dbReference type="PDB" id="5BPD">
    <property type="method" value="X-ray"/>
    <property type="resolution" value="2.40 A"/>
    <property type="chains" value="A/B/C/D=1-264"/>
</dbReference>
<dbReference type="PDB" id="5BPI">
    <property type="method" value="X-ray"/>
    <property type="resolution" value="3.20 A"/>
    <property type="chains" value="A/B/C/D=2-264"/>
</dbReference>
<dbReference type="PDB" id="5BQT">
    <property type="method" value="X-ray"/>
    <property type="resolution" value="3.00 A"/>
    <property type="chains" value="A/B/C/D=2-263"/>
</dbReference>
<dbReference type="PDBsum" id="5BOX"/>
<dbReference type="PDBsum" id="5BPD"/>
<dbReference type="PDBsum" id="5BPI"/>
<dbReference type="PDBsum" id="5BQT"/>
<dbReference type="SMR" id="Q8U3H1"/>
<dbReference type="IntAct" id="Q8U3H1">
    <property type="interactions" value="1"/>
</dbReference>
<dbReference type="STRING" id="186497.PF0496"/>
<dbReference type="PaxDb" id="186497-PF0496"/>
<dbReference type="GeneID" id="41712298"/>
<dbReference type="KEGG" id="pfu:PF0496"/>
<dbReference type="PATRIC" id="fig|186497.12.peg.519"/>
<dbReference type="eggNOG" id="arCOG02037">
    <property type="taxonomic scope" value="Archaea"/>
</dbReference>
<dbReference type="HOGENOM" id="CLU_072493_0_2_2"/>
<dbReference type="OrthoDB" id="30795at2157"/>
<dbReference type="PhylomeDB" id="Q8U3H1"/>
<dbReference type="EvolutionaryTrace" id="Q8U3H1"/>
<dbReference type="Proteomes" id="UP000001013">
    <property type="component" value="Chromosome"/>
</dbReference>
<dbReference type="GO" id="GO:0003677">
    <property type="term" value="F:DNA binding"/>
    <property type="evidence" value="ECO:0007669"/>
    <property type="project" value="UniProtKB-KW"/>
</dbReference>
<dbReference type="Gene3D" id="3.30.870.10">
    <property type="entry name" value="Endonuclease Chain A"/>
    <property type="match status" value="1"/>
</dbReference>
<dbReference type="Gene3D" id="1.10.10.10">
    <property type="entry name" value="Winged helix-like DNA-binding domain superfamily/Winged helix DNA-binding domain"/>
    <property type="match status" value="1"/>
</dbReference>
<dbReference type="InterPro" id="IPR053499">
    <property type="entry name" value="HTH-type_TrmB_regulator"/>
</dbReference>
<dbReference type="InterPro" id="IPR051797">
    <property type="entry name" value="TrmB-like"/>
</dbReference>
<dbReference type="InterPro" id="IPR021586">
    <property type="entry name" value="Tscrpt_reg_TrmB_C"/>
</dbReference>
<dbReference type="InterPro" id="IPR002831">
    <property type="entry name" value="Tscrpt_reg_TrmB_N"/>
</dbReference>
<dbReference type="InterPro" id="IPR036388">
    <property type="entry name" value="WH-like_DNA-bd_sf"/>
</dbReference>
<dbReference type="InterPro" id="IPR036390">
    <property type="entry name" value="WH_DNA-bd_sf"/>
</dbReference>
<dbReference type="NCBIfam" id="NF041141">
    <property type="entry name" value="tran_reg_TrmBL2"/>
    <property type="match status" value="1"/>
</dbReference>
<dbReference type="PANTHER" id="PTHR34293">
    <property type="entry name" value="HTH-TYPE TRANSCRIPTIONAL REGULATOR TRMBL2"/>
    <property type="match status" value="1"/>
</dbReference>
<dbReference type="PANTHER" id="PTHR34293:SF1">
    <property type="entry name" value="HTH-TYPE TRANSCRIPTIONAL REGULATOR TRMBL2"/>
    <property type="match status" value="1"/>
</dbReference>
<dbReference type="Pfam" id="PF11495">
    <property type="entry name" value="Regulator_TrmB"/>
    <property type="match status" value="1"/>
</dbReference>
<dbReference type="Pfam" id="PF01978">
    <property type="entry name" value="TrmB"/>
    <property type="match status" value="1"/>
</dbReference>
<dbReference type="SUPFAM" id="SSF56024">
    <property type="entry name" value="Phospholipase D/nuclease"/>
    <property type="match status" value="1"/>
</dbReference>
<dbReference type="SUPFAM" id="SSF46785">
    <property type="entry name" value="Winged helix' DNA-binding domain"/>
    <property type="match status" value="1"/>
</dbReference>
<evidence type="ECO:0000255" key="1"/>
<evidence type="ECO:0000269" key="2">
    <source>
    </source>
</evidence>
<evidence type="ECO:0000305" key="3"/>
<evidence type="ECO:0007829" key="4">
    <source>
        <dbReference type="PDB" id="5BOX"/>
    </source>
</evidence>
<evidence type="ECO:0007829" key="5">
    <source>
        <dbReference type="PDB" id="5BPD"/>
    </source>
</evidence>
<gene>
    <name type="primary">trmBL2</name>
    <name type="ordered locus">PF0496</name>
</gene>
<proteinExistence type="evidence at protein level"/>
<organism>
    <name type="scientific">Pyrococcus furiosus (strain ATCC 43587 / DSM 3638 / JCM 8422 / Vc1)</name>
    <dbReference type="NCBI Taxonomy" id="186497"/>
    <lineage>
        <taxon>Archaea</taxon>
        <taxon>Methanobacteriati</taxon>
        <taxon>Methanobacteriota</taxon>
        <taxon>Thermococci</taxon>
        <taxon>Thermococcales</taxon>
        <taxon>Thermococcaceae</taxon>
        <taxon>Pyrococcus</taxon>
    </lineage>
</organism>